<keyword id="KW-1015">Disulfide bond</keyword>
<keyword id="KW-0378">Hydrolase</keyword>
<keyword id="KW-0479">Metal-binding</keyword>
<keyword id="KW-0482">Metalloprotease</keyword>
<keyword id="KW-0645">Protease</keyword>
<keyword id="KW-1185">Reference proteome</keyword>
<keyword id="KW-0964">Secreted</keyword>
<keyword id="KW-0732">Signal</keyword>
<keyword id="KW-0862">Zinc</keyword>
<keyword id="KW-0865">Zymogen</keyword>
<sequence>MYRFIIFFSLLALTASKVSEPEKDDEIAVKIPTKRSVSEPPKDDDIAVKIPMRKKRGIAIHPWQWESHLWPNAEVPYDIASHYTATERGIILSAMEAFRDVTCVRFRPRRSTDKHYLQINKHYQLERCFSYIGRQSSRWLFGTRDGKVETRMKLDPSCLLYNGRGTVMHELMHILGFYHEHQRDDRDRRIGGSASHYNFKIYQRAKSYYMGGYDANSIMHYNFGSVPWQKRDYFSPSDIRNINTLYKCNNRVVSKFPSTIPSTSTTTTKAPQFELFEKKQIESNSLFRRRRS</sequence>
<protein>
    <recommendedName>
        <fullName>Zinc metalloproteinase nas-3</fullName>
        <ecNumber evidence="1">3.4.24.-</ecNumber>
    </recommendedName>
    <alternativeName>
        <fullName>Nematode astacin 3</fullName>
    </alternativeName>
</protein>
<gene>
    <name type="primary">nas-3</name>
    <name type="ORF">K06A4.1</name>
</gene>
<proteinExistence type="evidence at transcript level"/>
<feature type="signal peptide" evidence="2">
    <location>
        <begin position="1"/>
        <end position="16"/>
    </location>
</feature>
<feature type="propeptide" id="PRO_0000442651" evidence="4">
    <location>
        <begin position="17"/>
        <end status="unknown"/>
    </location>
</feature>
<feature type="chain" id="PRO_0000028908" description="Zinc metalloproteinase nas-3">
    <location>
        <begin status="unknown"/>
        <end position="292"/>
    </location>
</feature>
<feature type="domain" description="Peptidase M12A" evidence="3">
    <location>
        <begin position="56"/>
        <end position="249"/>
    </location>
</feature>
<feature type="active site" evidence="3">
    <location>
        <position position="170"/>
    </location>
</feature>
<feature type="binding site" evidence="3">
    <location>
        <position position="169"/>
    </location>
    <ligand>
        <name>Zn(2+)</name>
        <dbReference type="ChEBI" id="CHEBI:29105"/>
        <note>catalytic</note>
    </ligand>
</feature>
<feature type="binding site" evidence="3">
    <location>
        <position position="173"/>
    </location>
    <ligand>
        <name>Zn(2+)</name>
        <dbReference type="ChEBI" id="CHEBI:29105"/>
        <note>catalytic</note>
    </ligand>
</feature>
<feature type="binding site" evidence="3">
    <location>
        <position position="179"/>
    </location>
    <ligand>
        <name>Zn(2+)</name>
        <dbReference type="ChEBI" id="CHEBI:29105"/>
        <note>catalytic</note>
    </ligand>
</feature>
<feature type="disulfide bond" evidence="3">
    <location>
        <begin position="103"/>
        <end position="248"/>
    </location>
</feature>
<feature type="disulfide bond" evidence="3">
    <location>
        <begin position="128"/>
        <end position="158"/>
    </location>
</feature>
<dbReference type="EC" id="3.4.24.-" evidence="1"/>
<dbReference type="EMBL" id="Z70755">
    <property type="protein sequence ID" value="CAA94781.2"/>
    <property type="molecule type" value="Genomic_DNA"/>
</dbReference>
<dbReference type="EMBL" id="AJ561200">
    <property type="protein sequence ID" value="CAD99180.1"/>
    <property type="molecule type" value="mRNA"/>
</dbReference>
<dbReference type="PIR" id="T23354">
    <property type="entry name" value="T23354"/>
</dbReference>
<dbReference type="RefSeq" id="NP_505445.2">
    <property type="nucleotide sequence ID" value="NM_073044.5"/>
</dbReference>
<dbReference type="SMR" id="Q21252"/>
<dbReference type="FunCoup" id="Q21252">
    <property type="interactions" value="39"/>
</dbReference>
<dbReference type="STRING" id="6239.K06A4.1.1"/>
<dbReference type="MEROPS" id="M12.A16"/>
<dbReference type="PaxDb" id="6239-K06A4.1"/>
<dbReference type="EnsemblMetazoa" id="K06A4.1.1">
    <property type="protein sequence ID" value="K06A4.1.1"/>
    <property type="gene ID" value="WBGene00003522"/>
</dbReference>
<dbReference type="GeneID" id="187045"/>
<dbReference type="KEGG" id="cel:CELE_K06A4.1"/>
<dbReference type="UCSC" id="K06A4.1">
    <property type="organism name" value="c. elegans"/>
</dbReference>
<dbReference type="AGR" id="WB:WBGene00003522"/>
<dbReference type="CTD" id="187045"/>
<dbReference type="WormBase" id="K06A4.1">
    <property type="protein sequence ID" value="CE35894"/>
    <property type="gene ID" value="WBGene00003522"/>
    <property type="gene designation" value="nas-3"/>
</dbReference>
<dbReference type="eggNOG" id="KOG3714">
    <property type="taxonomic scope" value="Eukaryota"/>
</dbReference>
<dbReference type="GeneTree" id="ENSGT00940000154856"/>
<dbReference type="HOGENOM" id="CLU_998309_0_0_1"/>
<dbReference type="InParanoid" id="Q21252"/>
<dbReference type="OMA" id="YQLERCF"/>
<dbReference type="OrthoDB" id="291007at2759"/>
<dbReference type="PhylomeDB" id="Q21252"/>
<dbReference type="PRO" id="PR:Q21252"/>
<dbReference type="Proteomes" id="UP000001940">
    <property type="component" value="Chromosome V"/>
</dbReference>
<dbReference type="Bgee" id="WBGene00003522">
    <property type="expression patterns" value="Expressed in adult organism and 1 other cell type or tissue"/>
</dbReference>
<dbReference type="GO" id="GO:0005576">
    <property type="term" value="C:extracellular region"/>
    <property type="evidence" value="ECO:0007669"/>
    <property type="project" value="UniProtKB-SubCell"/>
</dbReference>
<dbReference type="GO" id="GO:0004222">
    <property type="term" value="F:metalloendopeptidase activity"/>
    <property type="evidence" value="ECO:0000318"/>
    <property type="project" value="GO_Central"/>
</dbReference>
<dbReference type="GO" id="GO:0008270">
    <property type="term" value="F:zinc ion binding"/>
    <property type="evidence" value="ECO:0007669"/>
    <property type="project" value="InterPro"/>
</dbReference>
<dbReference type="GO" id="GO:0006508">
    <property type="term" value="P:proteolysis"/>
    <property type="evidence" value="ECO:0007669"/>
    <property type="project" value="UniProtKB-KW"/>
</dbReference>
<dbReference type="FunFam" id="3.40.390.10:FF:000078">
    <property type="entry name" value="Metalloendopeptidase"/>
    <property type="match status" value="1"/>
</dbReference>
<dbReference type="Gene3D" id="3.40.390.10">
    <property type="entry name" value="Collagenase (Catalytic Domain)"/>
    <property type="match status" value="1"/>
</dbReference>
<dbReference type="InterPro" id="IPR024079">
    <property type="entry name" value="MetalloPept_cat_dom_sf"/>
</dbReference>
<dbReference type="InterPro" id="IPR001506">
    <property type="entry name" value="Peptidase_M12A"/>
</dbReference>
<dbReference type="InterPro" id="IPR006026">
    <property type="entry name" value="Peptidase_Metallo"/>
</dbReference>
<dbReference type="PANTHER" id="PTHR10127">
    <property type="entry name" value="DISCOIDIN, CUB, EGF, LAMININ , AND ZINC METALLOPROTEASE DOMAIN CONTAINING"/>
    <property type="match status" value="1"/>
</dbReference>
<dbReference type="PANTHER" id="PTHR10127:SF795">
    <property type="entry name" value="METALLOENDOPEPTIDASE-RELATED"/>
    <property type="match status" value="1"/>
</dbReference>
<dbReference type="Pfam" id="PF01400">
    <property type="entry name" value="Astacin"/>
    <property type="match status" value="1"/>
</dbReference>
<dbReference type="PRINTS" id="PR00480">
    <property type="entry name" value="ASTACIN"/>
</dbReference>
<dbReference type="SMART" id="SM00235">
    <property type="entry name" value="ZnMc"/>
    <property type="match status" value="1"/>
</dbReference>
<dbReference type="SUPFAM" id="SSF55486">
    <property type="entry name" value="Metalloproteases ('zincins'), catalytic domain"/>
    <property type="match status" value="1"/>
</dbReference>
<dbReference type="PROSITE" id="PS51864">
    <property type="entry name" value="ASTACIN"/>
    <property type="match status" value="1"/>
</dbReference>
<dbReference type="PROSITE" id="PS00142">
    <property type="entry name" value="ZINC_PROTEASE"/>
    <property type="match status" value="1"/>
</dbReference>
<accession>Q21252</accession>
<accession>Q7Z0P2</accession>
<organism>
    <name type="scientific">Caenorhabditis elegans</name>
    <dbReference type="NCBI Taxonomy" id="6239"/>
    <lineage>
        <taxon>Eukaryota</taxon>
        <taxon>Metazoa</taxon>
        <taxon>Ecdysozoa</taxon>
        <taxon>Nematoda</taxon>
        <taxon>Chromadorea</taxon>
        <taxon>Rhabditida</taxon>
        <taxon>Rhabditina</taxon>
        <taxon>Rhabditomorpha</taxon>
        <taxon>Rhabditoidea</taxon>
        <taxon>Rhabditidae</taxon>
        <taxon>Peloderinae</taxon>
        <taxon>Caenorhabditis</taxon>
    </lineage>
</organism>
<comment type="function">
    <text evidence="1">Metalloprotease.</text>
</comment>
<comment type="cofactor">
    <cofactor evidence="3">
        <name>Zn(2+)</name>
        <dbReference type="ChEBI" id="CHEBI:29105"/>
    </cofactor>
    <text evidence="3">Binds 1 zinc ion per subunit.</text>
</comment>
<comment type="subcellular location">
    <subcellularLocation>
        <location evidence="4">Secreted</location>
    </subcellularLocation>
</comment>
<name>NAS3_CAEEL</name>
<evidence type="ECO:0000250" key="1">
    <source>
        <dbReference type="UniProtKB" id="A8Q2D1"/>
    </source>
</evidence>
<evidence type="ECO:0000255" key="2"/>
<evidence type="ECO:0000255" key="3">
    <source>
        <dbReference type="PROSITE-ProRule" id="PRU01211"/>
    </source>
</evidence>
<evidence type="ECO:0000305" key="4"/>
<reference key="1">
    <citation type="journal article" date="1998" name="Science">
        <title>Genome sequence of the nematode C. elegans: a platform for investigating biology.</title>
        <authorList>
            <consortium name="The C. elegans sequencing consortium"/>
        </authorList>
    </citation>
    <scope>NUCLEOTIDE SEQUENCE [LARGE SCALE GENOMIC DNA]</scope>
    <source>
        <strain>Bristol N2</strain>
    </source>
</reference>
<reference key="2">
    <citation type="journal article" date="2003" name="Eur. J. Biochem.">
        <title>The astacin protein family in Caenorhabditis elegans.</title>
        <authorList>
            <person name="Moehrlen F."/>
            <person name="Hutter H."/>
            <person name="Zwilling R."/>
        </authorList>
    </citation>
    <scope>NUCLEOTIDE SEQUENCE [MRNA] OF 128-207</scope>
    <scope>NOMENCLATURE</scope>
    <source>
        <strain>Bristol N2</strain>
    </source>
</reference>